<name>YDR8_SCHPO</name>
<feature type="chain" id="PRO_0000116657" description="Uncharacterized protein C16E8.08">
    <location>
        <begin position="1"/>
        <end position="269"/>
    </location>
</feature>
<feature type="region of interest" description="Disordered" evidence="1">
    <location>
        <begin position="181"/>
        <end position="203"/>
    </location>
</feature>
<feature type="compositionally biased region" description="Basic and acidic residues" evidence="1">
    <location>
        <begin position="181"/>
        <end position="191"/>
    </location>
</feature>
<feature type="compositionally biased region" description="Polar residues" evidence="1">
    <location>
        <begin position="193"/>
        <end position="202"/>
    </location>
</feature>
<feature type="modified residue" description="Phosphoserine" evidence="2">
    <location>
        <position position="200"/>
    </location>
</feature>
<keyword id="KW-0597">Phosphoprotein</keyword>
<keyword id="KW-1185">Reference proteome</keyword>
<gene>
    <name type="ORF">SPAC16E8.08</name>
</gene>
<organism>
    <name type="scientific">Schizosaccharomyces pombe (strain 972 / ATCC 24843)</name>
    <name type="common">Fission yeast</name>
    <dbReference type="NCBI Taxonomy" id="284812"/>
    <lineage>
        <taxon>Eukaryota</taxon>
        <taxon>Fungi</taxon>
        <taxon>Dikarya</taxon>
        <taxon>Ascomycota</taxon>
        <taxon>Taphrinomycotina</taxon>
        <taxon>Schizosaccharomycetes</taxon>
        <taxon>Schizosaccharomycetales</taxon>
        <taxon>Schizosaccharomycetaceae</taxon>
        <taxon>Schizosaccharomyces</taxon>
    </lineage>
</organism>
<proteinExistence type="evidence at protein level"/>
<protein>
    <recommendedName>
        <fullName>Uncharacterized protein C16E8.08</fullName>
    </recommendedName>
</protein>
<evidence type="ECO:0000256" key="1">
    <source>
        <dbReference type="SAM" id="MobiDB-lite"/>
    </source>
</evidence>
<evidence type="ECO:0000269" key="2">
    <source>
    </source>
</evidence>
<sequence>MAFSPANSFLINKSICESKEVEPLEANLFGKLHNKLLICKAKKENLEKKLAYQMMYSKLLKSLPKLSSLEENKLTKLKAPIEDMENTKKELEEIRKQSTETELRYLKSLSNTLSFGTLSLSNEINKVGPSASFMLKEVHDSVQVLEQRLEKMGLIEKPSESSESSIYSILASLKHTNDSLQKKELSPHEIAESPSSHSTSPMGRNVDTETLSFLLIDWQRLCAEQNTFLRDITNNMSSSVPQDVLSQLRQFFFRSELLSDKLSNLCSES</sequence>
<accession>O13743</accession>
<dbReference type="EMBL" id="CU329670">
    <property type="protein sequence ID" value="CAB11036.1"/>
    <property type="molecule type" value="Genomic_DNA"/>
</dbReference>
<dbReference type="PIR" id="T37788">
    <property type="entry name" value="T37788"/>
</dbReference>
<dbReference type="SMR" id="O13743"/>
<dbReference type="BioGRID" id="278794">
    <property type="interactions" value="4"/>
</dbReference>
<dbReference type="STRING" id="284812.O13743"/>
<dbReference type="iPTMnet" id="O13743"/>
<dbReference type="PaxDb" id="4896-SPAC16E8.08.1"/>
<dbReference type="EnsemblFungi" id="SPAC16E8.08.1">
    <property type="protein sequence ID" value="SPAC16E8.08.1:pep"/>
    <property type="gene ID" value="SPAC16E8.08"/>
</dbReference>
<dbReference type="KEGG" id="spo:2542328"/>
<dbReference type="PomBase" id="SPAC16E8.08"/>
<dbReference type="VEuPathDB" id="FungiDB:SPAC16E8.08"/>
<dbReference type="HOGENOM" id="CLU_1042658_0_0_1"/>
<dbReference type="InParanoid" id="O13743"/>
<dbReference type="OMA" id="HEIAESP"/>
<dbReference type="PRO" id="PR:O13743"/>
<dbReference type="Proteomes" id="UP000002485">
    <property type="component" value="Chromosome I"/>
</dbReference>
<dbReference type="GO" id="GO:0051285">
    <property type="term" value="C:cell cortex of cell tip"/>
    <property type="evidence" value="ECO:0000314"/>
    <property type="project" value="PomBase"/>
</dbReference>
<dbReference type="GO" id="GO:0032153">
    <property type="term" value="C:cell division site"/>
    <property type="evidence" value="ECO:0000314"/>
    <property type="project" value="PomBase"/>
</dbReference>
<dbReference type="GO" id="GO:0000281">
    <property type="term" value="P:mitotic cytokinesis"/>
    <property type="evidence" value="ECO:0000269"/>
    <property type="project" value="PomBase"/>
</dbReference>
<reference key="1">
    <citation type="journal article" date="2002" name="Nature">
        <title>The genome sequence of Schizosaccharomyces pombe.</title>
        <authorList>
            <person name="Wood V."/>
            <person name="Gwilliam R."/>
            <person name="Rajandream M.A."/>
            <person name="Lyne M.H."/>
            <person name="Lyne R."/>
            <person name="Stewart A."/>
            <person name="Sgouros J.G."/>
            <person name="Peat N."/>
            <person name="Hayles J."/>
            <person name="Baker S.G."/>
            <person name="Basham D."/>
            <person name="Bowman S."/>
            <person name="Brooks K."/>
            <person name="Brown D."/>
            <person name="Brown S."/>
            <person name="Chillingworth T."/>
            <person name="Churcher C.M."/>
            <person name="Collins M."/>
            <person name="Connor R."/>
            <person name="Cronin A."/>
            <person name="Davis P."/>
            <person name="Feltwell T."/>
            <person name="Fraser A."/>
            <person name="Gentles S."/>
            <person name="Goble A."/>
            <person name="Hamlin N."/>
            <person name="Harris D.E."/>
            <person name="Hidalgo J."/>
            <person name="Hodgson G."/>
            <person name="Holroyd S."/>
            <person name="Hornsby T."/>
            <person name="Howarth S."/>
            <person name="Huckle E.J."/>
            <person name="Hunt S."/>
            <person name="Jagels K."/>
            <person name="James K.D."/>
            <person name="Jones L."/>
            <person name="Jones M."/>
            <person name="Leather S."/>
            <person name="McDonald S."/>
            <person name="McLean J."/>
            <person name="Mooney P."/>
            <person name="Moule S."/>
            <person name="Mungall K.L."/>
            <person name="Murphy L.D."/>
            <person name="Niblett D."/>
            <person name="Odell C."/>
            <person name="Oliver K."/>
            <person name="O'Neil S."/>
            <person name="Pearson D."/>
            <person name="Quail M.A."/>
            <person name="Rabbinowitsch E."/>
            <person name="Rutherford K.M."/>
            <person name="Rutter S."/>
            <person name="Saunders D."/>
            <person name="Seeger K."/>
            <person name="Sharp S."/>
            <person name="Skelton J."/>
            <person name="Simmonds M.N."/>
            <person name="Squares R."/>
            <person name="Squares S."/>
            <person name="Stevens K."/>
            <person name="Taylor K."/>
            <person name="Taylor R.G."/>
            <person name="Tivey A."/>
            <person name="Walsh S.V."/>
            <person name="Warren T."/>
            <person name="Whitehead S."/>
            <person name="Woodward J.R."/>
            <person name="Volckaert G."/>
            <person name="Aert R."/>
            <person name="Robben J."/>
            <person name="Grymonprez B."/>
            <person name="Weltjens I."/>
            <person name="Vanstreels E."/>
            <person name="Rieger M."/>
            <person name="Schaefer M."/>
            <person name="Mueller-Auer S."/>
            <person name="Gabel C."/>
            <person name="Fuchs M."/>
            <person name="Duesterhoeft A."/>
            <person name="Fritzc C."/>
            <person name="Holzer E."/>
            <person name="Moestl D."/>
            <person name="Hilbert H."/>
            <person name="Borzym K."/>
            <person name="Langer I."/>
            <person name="Beck A."/>
            <person name="Lehrach H."/>
            <person name="Reinhardt R."/>
            <person name="Pohl T.M."/>
            <person name="Eger P."/>
            <person name="Zimmermann W."/>
            <person name="Wedler H."/>
            <person name="Wambutt R."/>
            <person name="Purnelle B."/>
            <person name="Goffeau A."/>
            <person name="Cadieu E."/>
            <person name="Dreano S."/>
            <person name="Gloux S."/>
            <person name="Lelaure V."/>
            <person name="Mottier S."/>
            <person name="Galibert F."/>
            <person name="Aves S.J."/>
            <person name="Xiang Z."/>
            <person name="Hunt C."/>
            <person name="Moore K."/>
            <person name="Hurst S.M."/>
            <person name="Lucas M."/>
            <person name="Rochet M."/>
            <person name="Gaillardin C."/>
            <person name="Tallada V.A."/>
            <person name="Garzon A."/>
            <person name="Thode G."/>
            <person name="Daga R.R."/>
            <person name="Cruzado L."/>
            <person name="Jimenez J."/>
            <person name="Sanchez M."/>
            <person name="del Rey F."/>
            <person name="Benito J."/>
            <person name="Dominguez A."/>
            <person name="Revuelta J.L."/>
            <person name="Moreno S."/>
            <person name="Armstrong J."/>
            <person name="Forsburg S.L."/>
            <person name="Cerutti L."/>
            <person name="Lowe T."/>
            <person name="McCombie W.R."/>
            <person name="Paulsen I."/>
            <person name="Potashkin J."/>
            <person name="Shpakovski G.V."/>
            <person name="Ussery D."/>
            <person name="Barrell B.G."/>
            <person name="Nurse P."/>
        </authorList>
    </citation>
    <scope>NUCLEOTIDE SEQUENCE [LARGE SCALE GENOMIC DNA]</scope>
    <source>
        <strain>972 / ATCC 24843</strain>
    </source>
</reference>
<reference key="2">
    <citation type="journal article" date="2008" name="J. Proteome Res.">
        <title>Phosphoproteome analysis of fission yeast.</title>
        <authorList>
            <person name="Wilson-Grady J.T."/>
            <person name="Villen J."/>
            <person name="Gygi S.P."/>
        </authorList>
    </citation>
    <scope>PHOSPHORYLATION [LARGE SCALE ANALYSIS] AT SER-200</scope>
    <scope>IDENTIFICATION BY MASS SPECTROMETRY</scope>
</reference>